<organism>
    <name type="scientific">Pongo abelii</name>
    <name type="common">Sumatran orangutan</name>
    <name type="synonym">Pongo pygmaeus abelii</name>
    <dbReference type="NCBI Taxonomy" id="9601"/>
    <lineage>
        <taxon>Eukaryota</taxon>
        <taxon>Metazoa</taxon>
        <taxon>Chordata</taxon>
        <taxon>Craniata</taxon>
        <taxon>Vertebrata</taxon>
        <taxon>Euteleostomi</taxon>
        <taxon>Mammalia</taxon>
        <taxon>Eutheria</taxon>
        <taxon>Euarchontoglires</taxon>
        <taxon>Primates</taxon>
        <taxon>Haplorrhini</taxon>
        <taxon>Catarrhini</taxon>
        <taxon>Hominidae</taxon>
        <taxon>Pongo</taxon>
    </lineage>
</organism>
<proteinExistence type="evidence at transcript level"/>
<feature type="chain" id="PRO_0000084023" description="Histamine N-methyltransferase">
    <location>
        <begin position="1"/>
        <end position="292"/>
    </location>
</feature>
<feature type="binding site" evidence="2">
    <location>
        <position position="28"/>
    </location>
    <ligand>
        <name>substrate</name>
    </ligand>
</feature>
<feature type="binding site" evidence="2">
    <location>
        <position position="60"/>
    </location>
    <ligand>
        <name>S-adenosyl-L-methionine</name>
        <dbReference type="ChEBI" id="CHEBI:59789"/>
    </ligand>
</feature>
<feature type="binding site" evidence="2">
    <location>
        <position position="89"/>
    </location>
    <ligand>
        <name>S-adenosyl-L-methionine</name>
        <dbReference type="ChEBI" id="CHEBI:59789"/>
    </ligand>
</feature>
<feature type="binding site" evidence="2">
    <location>
        <position position="94"/>
    </location>
    <ligand>
        <name>S-adenosyl-L-methionine</name>
        <dbReference type="ChEBI" id="CHEBI:59789"/>
    </ligand>
</feature>
<feature type="binding site" evidence="2">
    <location>
        <position position="120"/>
    </location>
    <ligand>
        <name>S-adenosyl-L-methionine</name>
        <dbReference type="ChEBI" id="CHEBI:59789"/>
    </ligand>
</feature>
<feature type="binding site" evidence="2">
    <location>
        <position position="142"/>
    </location>
    <ligand>
        <name>S-adenosyl-L-methionine</name>
        <dbReference type="ChEBI" id="CHEBI:59789"/>
    </ligand>
</feature>
<feature type="binding site" evidence="2">
    <location>
        <position position="283"/>
    </location>
    <ligand>
        <name>substrate</name>
    </ligand>
</feature>
<protein>
    <recommendedName>
        <fullName>Histamine N-methyltransferase</fullName>
        <shortName>HMT</shortName>
        <ecNumber evidence="1">2.1.1.8</ecNumber>
    </recommendedName>
</protein>
<gene>
    <name type="primary">HNMT</name>
</gene>
<accession>Q5R7C3</accession>
<name>HNMT_PONAB</name>
<reference key="1">
    <citation type="submission" date="2004-11" db="EMBL/GenBank/DDBJ databases">
        <authorList>
            <consortium name="The German cDNA consortium"/>
        </authorList>
    </citation>
    <scope>NUCLEOTIDE SEQUENCE [LARGE SCALE MRNA]</scope>
    <source>
        <tissue>Kidney</tissue>
    </source>
</reference>
<dbReference type="EC" id="2.1.1.8" evidence="1"/>
<dbReference type="EMBL" id="CR860195">
    <property type="protein sequence ID" value="CAH92337.1"/>
    <property type="molecule type" value="mRNA"/>
</dbReference>
<dbReference type="RefSeq" id="NP_001127541.1">
    <property type="nucleotide sequence ID" value="NM_001134069.2"/>
</dbReference>
<dbReference type="SMR" id="Q5R7C3"/>
<dbReference type="FunCoup" id="Q5R7C3">
    <property type="interactions" value="994"/>
</dbReference>
<dbReference type="STRING" id="9601.ENSPPYP00000014313"/>
<dbReference type="GeneID" id="100174618"/>
<dbReference type="KEGG" id="pon:100174618"/>
<dbReference type="CTD" id="3176"/>
<dbReference type="eggNOG" id="ENOG502QQJ1">
    <property type="taxonomic scope" value="Eukaryota"/>
</dbReference>
<dbReference type="InParanoid" id="Q5R7C3"/>
<dbReference type="OrthoDB" id="5984880at2759"/>
<dbReference type="Proteomes" id="UP000001595">
    <property type="component" value="Unplaced"/>
</dbReference>
<dbReference type="GO" id="GO:0005737">
    <property type="term" value="C:cytoplasm"/>
    <property type="evidence" value="ECO:0000250"/>
    <property type="project" value="UniProtKB"/>
</dbReference>
<dbReference type="GO" id="GO:0046539">
    <property type="term" value="F:histamine N-methyltransferase activity"/>
    <property type="evidence" value="ECO:0000250"/>
    <property type="project" value="UniProtKB"/>
</dbReference>
<dbReference type="GO" id="GO:0001695">
    <property type="term" value="P:histamine catabolic process"/>
    <property type="evidence" value="ECO:0000250"/>
    <property type="project" value="UniProtKB"/>
</dbReference>
<dbReference type="GO" id="GO:0032259">
    <property type="term" value="P:methylation"/>
    <property type="evidence" value="ECO:0000250"/>
    <property type="project" value="UniProtKB"/>
</dbReference>
<dbReference type="CDD" id="cd02440">
    <property type="entry name" value="AdoMet_MTases"/>
    <property type="match status" value="1"/>
</dbReference>
<dbReference type="FunFam" id="3.40.50.150:FF:000118">
    <property type="entry name" value="Histamine N-methyltransferase"/>
    <property type="match status" value="1"/>
</dbReference>
<dbReference type="Gene3D" id="3.40.50.150">
    <property type="entry name" value="Vaccinia Virus protein VP39"/>
    <property type="match status" value="1"/>
</dbReference>
<dbReference type="InterPro" id="IPR016673">
    <property type="entry name" value="HHMT-like"/>
</dbReference>
<dbReference type="InterPro" id="IPR029063">
    <property type="entry name" value="SAM-dependent_MTases_sf"/>
</dbReference>
<dbReference type="Pfam" id="PF13489">
    <property type="entry name" value="Methyltransf_23"/>
    <property type="match status" value="1"/>
</dbReference>
<dbReference type="PIRSF" id="PIRSF016616">
    <property type="entry name" value="HHMT"/>
    <property type="match status" value="1"/>
</dbReference>
<dbReference type="SUPFAM" id="SSF53335">
    <property type="entry name" value="S-adenosyl-L-methionine-dependent methyltransferases"/>
    <property type="match status" value="1"/>
</dbReference>
<dbReference type="PROSITE" id="PS51597">
    <property type="entry name" value="SAM_HNMT"/>
    <property type="match status" value="1"/>
</dbReference>
<evidence type="ECO:0000250" key="1">
    <source>
        <dbReference type="UniProtKB" id="P50135"/>
    </source>
</evidence>
<evidence type="ECO:0000255" key="2">
    <source>
        <dbReference type="PROSITE-ProRule" id="PRU00929"/>
    </source>
</evidence>
<sequence length="292" mass="33222">MVSSMRSLFSDHGKYVESFRRFLNHSTEHQCMQEFMDKKLPGIIARIGDTKSEIKILSIGGGAGEIDLQILSKVQAQYPGVCINNEVVEPSAEQIAKYKGPVAKTSNLENVKFAWHKETSSEYQSRILEKKELQKWDFIHMIQMLYYVKDIPATLKFFHSLLGTNAKMLIIVVSGSSGWDKLWKKYGSRFPQNDLCQYVTSDDLTQMLDNLGLKYECYDLFSTMDISDCFIDGNENGDLLWDFLTETCNFNATAPPDLKAELGKDLQEPEFSAKKEGKVLFNNTLSFIVIEA</sequence>
<comment type="function">
    <text evidence="1">Inactivates histamine by N-methylation. Plays an important role in degrading histamine and in regulating the airway response to histamine.</text>
</comment>
<comment type="catalytic activity">
    <reaction evidence="1 2">
        <text>histamine + S-adenosyl-L-methionine = N(tau)-methylhistamine + S-adenosyl-L-homocysteine + H(+)</text>
        <dbReference type="Rhea" id="RHEA:19301"/>
        <dbReference type="ChEBI" id="CHEBI:15378"/>
        <dbReference type="ChEBI" id="CHEBI:57856"/>
        <dbReference type="ChEBI" id="CHEBI:58432"/>
        <dbReference type="ChEBI" id="CHEBI:58600"/>
        <dbReference type="ChEBI" id="CHEBI:59789"/>
        <dbReference type="EC" id="2.1.1.8"/>
    </reaction>
</comment>
<comment type="subunit">
    <text evidence="1">Monomer.</text>
</comment>
<comment type="subcellular location">
    <subcellularLocation>
        <location evidence="1">Cytoplasm</location>
    </subcellularLocation>
</comment>
<comment type="similarity">
    <text evidence="2">Belongs to the class I-like SAM-binding methyltransferase superfamily. HNMT family.</text>
</comment>
<keyword id="KW-0963">Cytoplasm</keyword>
<keyword id="KW-0489">Methyltransferase</keyword>
<keyword id="KW-1185">Reference proteome</keyword>
<keyword id="KW-0949">S-adenosyl-L-methionine</keyword>
<keyword id="KW-0808">Transferase</keyword>